<proteinExistence type="inferred from homology"/>
<protein>
    <recommendedName>
        <fullName evidence="1">5'-nucleotidase SurE</fullName>
        <ecNumber evidence="1">3.1.3.5</ecNumber>
    </recommendedName>
    <alternativeName>
        <fullName evidence="1">Nucleoside 5'-monophosphate phosphohydrolase</fullName>
    </alternativeName>
</protein>
<feature type="chain" id="PRO_1000196613" description="5'-nucleotidase SurE">
    <location>
        <begin position="1"/>
        <end position="256"/>
    </location>
</feature>
<feature type="binding site" evidence="1">
    <location>
        <position position="8"/>
    </location>
    <ligand>
        <name>a divalent metal cation</name>
        <dbReference type="ChEBI" id="CHEBI:60240"/>
    </ligand>
</feature>
<feature type="binding site" evidence="1">
    <location>
        <position position="9"/>
    </location>
    <ligand>
        <name>a divalent metal cation</name>
        <dbReference type="ChEBI" id="CHEBI:60240"/>
    </ligand>
</feature>
<feature type="binding site" evidence="1">
    <location>
        <position position="40"/>
    </location>
    <ligand>
        <name>a divalent metal cation</name>
        <dbReference type="ChEBI" id="CHEBI:60240"/>
    </ligand>
</feature>
<feature type="binding site" evidence="1">
    <location>
        <position position="92"/>
    </location>
    <ligand>
        <name>a divalent metal cation</name>
        <dbReference type="ChEBI" id="CHEBI:60240"/>
    </ligand>
</feature>
<organism>
    <name type="scientific">Sinorhizobium fredii (strain NBRC 101917 / NGR234)</name>
    <dbReference type="NCBI Taxonomy" id="394"/>
    <lineage>
        <taxon>Bacteria</taxon>
        <taxon>Pseudomonadati</taxon>
        <taxon>Pseudomonadota</taxon>
        <taxon>Alphaproteobacteria</taxon>
        <taxon>Hyphomicrobiales</taxon>
        <taxon>Rhizobiaceae</taxon>
        <taxon>Sinorhizobium/Ensifer group</taxon>
        <taxon>Sinorhizobium</taxon>
    </lineage>
</organism>
<dbReference type="EC" id="3.1.3.5" evidence="1"/>
<dbReference type="EMBL" id="CP001389">
    <property type="protein sequence ID" value="ACP25155.1"/>
    <property type="molecule type" value="Genomic_DNA"/>
</dbReference>
<dbReference type="RefSeq" id="WP_012707931.1">
    <property type="nucleotide sequence ID" value="NC_012587.1"/>
</dbReference>
<dbReference type="RefSeq" id="YP_002825908.1">
    <property type="nucleotide sequence ID" value="NC_012587.1"/>
</dbReference>
<dbReference type="SMR" id="C3MBU3"/>
<dbReference type="STRING" id="394.NGR_c13750"/>
<dbReference type="KEGG" id="rhi:NGR_c13750"/>
<dbReference type="PATRIC" id="fig|394.7.peg.4195"/>
<dbReference type="eggNOG" id="COG0496">
    <property type="taxonomic scope" value="Bacteria"/>
</dbReference>
<dbReference type="HOGENOM" id="CLU_045192_1_2_5"/>
<dbReference type="OrthoDB" id="9780815at2"/>
<dbReference type="Proteomes" id="UP000001054">
    <property type="component" value="Chromosome"/>
</dbReference>
<dbReference type="GO" id="GO:0005737">
    <property type="term" value="C:cytoplasm"/>
    <property type="evidence" value="ECO:0007669"/>
    <property type="project" value="UniProtKB-SubCell"/>
</dbReference>
<dbReference type="GO" id="GO:0008254">
    <property type="term" value="F:3'-nucleotidase activity"/>
    <property type="evidence" value="ECO:0007669"/>
    <property type="project" value="TreeGrafter"/>
</dbReference>
<dbReference type="GO" id="GO:0008253">
    <property type="term" value="F:5'-nucleotidase activity"/>
    <property type="evidence" value="ECO:0007669"/>
    <property type="project" value="UniProtKB-UniRule"/>
</dbReference>
<dbReference type="GO" id="GO:0004309">
    <property type="term" value="F:exopolyphosphatase activity"/>
    <property type="evidence" value="ECO:0007669"/>
    <property type="project" value="TreeGrafter"/>
</dbReference>
<dbReference type="GO" id="GO:0046872">
    <property type="term" value="F:metal ion binding"/>
    <property type="evidence" value="ECO:0007669"/>
    <property type="project" value="UniProtKB-UniRule"/>
</dbReference>
<dbReference type="GO" id="GO:0000166">
    <property type="term" value="F:nucleotide binding"/>
    <property type="evidence" value="ECO:0007669"/>
    <property type="project" value="UniProtKB-KW"/>
</dbReference>
<dbReference type="FunFam" id="3.40.1210.10:FF:000001">
    <property type="entry name" value="5'/3'-nucleotidase SurE"/>
    <property type="match status" value="1"/>
</dbReference>
<dbReference type="Gene3D" id="3.40.1210.10">
    <property type="entry name" value="Survival protein SurE-like phosphatase/nucleotidase"/>
    <property type="match status" value="1"/>
</dbReference>
<dbReference type="HAMAP" id="MF_00060">
    <property type="entry name" value="SurE"/>
    <property type="match status" value="1"/>
</dbReference>
<dbReference type="InterPro" id="IPR030048">
    <property type="entry name" value="SurE"/>
</dbReference>
<dbReference type="InterPro" id="IPR002828">
    <property type="entry name" value="SurE-like_Pase/nucleotidase"/>
</dbReference>
<dbReference type="InterPro" id="IPR036523">
    <property type="entry name" value="SurE-like_sf"/>
</dbReference>
<dbReference type="NCBIfam" id="NF001490">
    <property type="entry name" value="PRK00346.1-4"/>
    <property type="match status" value="1"/>
</dbReference>
<dbReference type="NCBIfam" id="TIGR00087">
    <property type="entry name" value="surE"/>
    <property type="match status" value="1"/>
</dbReference>
<dbReference type="PANTHER" id="PTHR30457">
    <property type="entry name" value="5'-NUCLEOTIDASE SURE"/>
    <property type="match status" value="1"/>
</dbReference>
<dbReference type="PANTHER" id="PTHR30457:SF12">
    <property type="entry name" value="5'_3'-NUCLEOTIDASE SURE"/>
    <property type="match status" value="1"/>
</dbReference>
<dbReference type="Pfam" id="PF01975">
    <property type="entry name" value="SurE"/>
    <property type="match status" value="1"/>
</dbReference>
<dbReference type="SUPFAM" id="SSF64167">
    <property type="entry name" value="SurE-like"/>
    <property type="match status" value="1"/>
</dbReference>
<comment type="function">
    <text evidence="1">Nucleotidase that shows phosphatase activity on nucleoside 5'-monophosphates.</text>
</comment>
<comment type="catalytic activity">
    <reaction evidence="1">
        <text>a ribonucleoside 5'-phosphate + H2O = a ribonucleoside + phosphate</text>
        <dbReference type="Rhea" id="RHEA:12484"/>
        <dbReference type="ChEBI" id="CHEBI:15377"/>
        <dbReference type="ChEBI" id="CHEBI:18254"/>
        <dbReference type="ChEBI" id="CHEBI:43474"/>
        <dbReference type="ChEBI" id="CHEBI:58043"/>
        <dbReference type="EC" id="3.1.3.5"/>
    </reaction>
</comment>
<comment type="cofactor">
    <cofactor evidence="1">
        <name>a divalent metal cation</name>
        <dbReference type="ChEBI" id="CHEBI:60240"/>
    </cofactor>
    <text evidence="1">Binds 1 divalent metal cation per subunit.</text>
</comment>
<comment type="subcellular location">
    <subcellularLocation>
        <location evidence="1">Cytoplasm</location>
    </subcellularLocation>
</comment>
<comment type="similarity">
    <text evidence="1">Belongs to the SurE nucleotidase family.</text>
</comment>
<reference key="1">
    <citation type="journal article" date="2009" name="Appl. Environ. Microbiol.">
        <title>Rhizobium sp. strain NGR234 possesses a remarkable number of secretion systems.</title>
        <authorList>
            <person name="Schmeisser C."/>
            <person name="Liesegang H."/>
            <person name="Krysciak D."/>
            <person name="Bakkou N."/>
            <person name="Le Quere A."/>
            <person name="Wollherr A."/>
            <person name="Heinemeyer I."/>
            <person name="Morgenstern B."/>
            <person name="Pommerening-Roeser A."/>
            <person name="Flores M."/>
            <person name="Palacios R."/>
            <person name="Brenner S."/>
            <person name="Gottschalk G."/>
            <person name="Schmitz R.A."/>
            <person name="Broughton W.J."/>
            <person name="Perret X."/>
            <person name="Strittmatter A.W."/>
            <person name="Streit W.R."/>
        </authorList>
    </citation>
    <scope>NUCLEOTIDE SEQUENCE [LARGE SCALE GENOMIC DNA]</scope>
    <source>
        <strain>NBRC 101917 / NGR234</strain>
    </source>
</reference>
<accession>C3MBU3</accession>
<gene>
    <name evidence="1" type="primary">surE</name>
    <name type="ordered locus">NGR_c13750</name>
</gene>
<name>SURE_SINFN</name>
<evidence type="ECO:0000255" key="1">
    <source>
        <dbReference type="HAMAP-Rule" id="MF_00060"/>
    </source>
</evidence>
<sequence>MRILLTNDDGIHAEGLSVLERIALTISDDVWVVAPEVDQSGLAHSLTLSEPLRLRQVSERHFALRGTPTDCVIMAARKILDRKPDLVLSGVNIGANLADDVTYSGTVAGAIEGTLQGIRSIAVSQAYHHAVGGAVSWDVAETHAPALIRTLMNVELPDGTLLNVNFPNCAADAVAGVEVTSQGKLEFGLSIDERIDGRGYPYFWLRFGERYGDFRSGTDIHAVRENRISVTPLKLDLTDYTVQERIARALREGTGA</sequence>
<keyword id="KW-0963">Cytoplasm</keyword>
<keyword id="KW-0378">Hydrolase</keyword>
<keyword id="KW-0479">Metal-binding</keyword>
<keyword id="KW-0547">Nucleotide-binding</keyword>
<keyword id="KW-1185">Reference proteome</keyword>